<organism>
    <name type="scientific">Bacillus subtilis (strain 168)</name>
    <dbReference type="NCBI Taxonomy" id="224308"/>
    <lineage>
        <taxon>Bacteria</taxon>
        <taxon>Bacillati</taxon>
        <taxon>Bacillota</taxon>
        <taxon>Bacilli</taxon>
        <taxon>Bacillales</taxon>
        <taxon>Bacillaceae</taxon>
        <taxon>Bacillus</taxon>
    </lineage>
</organism>
<name>YQFW_BACSU</name>
<accession>P54480</accession>
<gene>
    <name type="primary">yqfW</name>
    <name type="ordered locus">BSU25090</name>
</gene>
<comment type="similarity">
    <text evidence="1">Belongs to the 5'(3')-deoxyribonucleotidase family.</text>
</comment>
<dbReference type="EC" id="3.1.3.-"/>
<dbReference type="EMBL" id="D84432">
    <property type="protein sequence ID" value="BAA12500.1"/>
    <property type="molecule type" value="Genomic_DNA"/>
</dbReference>
<dbReference type="EMBL" id="AL009126">
    <property type="protein sequence ID" value="CAB14439.1"/>
    <property type="molecule type" value="Genomic_DNA"/>
</dbReference>
<dbReference type="PIR" id="A69955">
    <property type="entry name" value="A69955"/>
</dbReference>
<dbReference type="RefSeq" id="NP_390388.1">
    <property type="nucleotide sequence ID" value="NC_000964.3"/>
</dbReference>
<dbReference type="RefSeq" id="WP_003246215.1">
    <property type="nucleotide sequence ID" value="NZ_OZ025638.1"/>
</dbReference>
<dbReference type="SMR" id="P54480"/>
<dbReference type="FunCoup" id="P54480">
    <property type="interactions" value="11"/>
</dbReference>
<dbReference type="STRING" id="224308.BSU25090"/>
<dbReference type="PaxDb" id="224308-BSU25090"/>
<dbReference type="EnsemblBacteria" id="CAB14439">
    <property type="protein sequence ID" value="CAB14439"/>
    <property type="gene ID" value="BSU_25090"/>
</dbReference>
<dbReference type="GeneID" id="937915"/>
<dbReference type="KEGG" id="bsu:BSU25090"/>
<dbReference type="PATRIC" id="fig|224308.179.peg.2728"/>
<dbReference type="eggNOG" id="COG5663">
    <property type="taxonomic scope" value="Bacteria"/>
</dbReference>
<dbReference type="InParanoid" id="P54480"/>
<dbReference type="OrthoDB" id="2471595at2"/>
<dbReference type="BioCyc" id="BSUB:BSU25090-MONOMER"/>
<dbReference type="Proteomes" id="UP000001570">
    <property type="component" value="Chromosome"/>
</dbReference>
<dbReference type="GO" id="GO:0016787">
    <property type="term" value="F:hydrolase activity"/>
    <property type="evidence" value="ECO:0007669"/>
    <property type="project" value="UniProtKB-KW"/>
</dbReference>
<dbReference type="Gene3D" id="3.40.50.1000">
    <property type="entry name" value="HAD superfamily/HAD-like"/>
    <property type="match status" value="1"/>
</dbReference>
<dbReference type="InterPro" id="IPR052419">
    <property type="entry name" value="5_3-deoxyribonucleotidase-like"/>
</dbReference>
<dbReference type="InterPro" id="IPR036412">
    <property type="entry name" value="HAD-like_sf"/>
</dbReference>
<dbReference type="InterPro" id="IPR023214">
    <property type="entry name" value="HAD_sf"/>
</dbReference>
<dbReference type="InterPro" id="IPR009206">
    <property type="entry name" value="Nucleotidase_putative"/>
</dbReference>
<dbReference type="PANTHER" id="PTHR35134">
    <property type="entry name" value="NUCLEOTIDASE YQFW-RELATED"/>
    <property type="match status" value="1"/>
</dbReference>
<dbReference type="PANTHER" id="PTHR35134:SF2">
    <property type="entry name" value="NUCLEOTIDASE YQFW-RELATED"/>
    <property type="match status" value="1"/>
</dbReference>
<dbReference type="PIRSF" id="PIRSF021362">
    <property type="entry name" value="UCP021362_HAD"/>
    <property type="match status" value="1"/>
</dbReference>
<dbReference type="SUPFAM" id="SSF56784">
    <property type="entry name" value="HAD-like"/>
    <property type="match status" value="1"/>
</dbReference>
<protein>
    <recommendedName>
        <fullName>Putative nucleotidase YqfW</fullName>
        <ecNumber>3.1.3.-</ecNumber>
    </recommendedName>
</protein>
<evidence type="ECO:0000305" key="1"/>
<proteinExistence type="inferred from homology"/>
<feature type="chain" id="PRO_0000164391" description="Putative nucleotidase YqfW">
    <location>
        <begin position="1"/>
        <end position="193"/>
    </location>
</feature>
<reference key="1">
    <citation type="journal article" date="1996" name="Microbiology">
        <title>Systematic sequencing of the 283 kb 210 degrees-232 degrees region of the Bacillus subtilis genome containing the skin element and many sporulation genes.</title>
        <authorList>
            <person name="Mizuno M."/>
            <person name="Masuda S."/>
            <person name="Takemaru K."/>
            <person name="Hosono S."/>
            <person name="Sato T."/>
            <person name="Takeuchi M."/>
            <person name="Kobayashi Y."/>
        </authorList>
    </citation>
    <scope>NUCLEOTIDE SEQUENCE [GENOMIC DNA]</scope>
    <source>
        <strain>168 / JH642</strain>
    </source>
</reference>
<reference key="2">
    <citation type="journal article" date="1997" name="Nature">
        <title>The complete genome sequence of the Gram-positive bacterium Bacillus subtilis.</title>
        <authorList>
            <person name="Kunst F."/>
            <person name="Ogasawara N."/>
            <person name="Moszer I."/>
            <person name="Albertini A.M."/>
            <person name="Alloni G."/>
            <person name="Azevedo V."/>
            <person name="Bertero M.G."/>
            <person name="Bessieres P."/>
            <person name="Bolotin A."/>
            <person name="Borchert S."/>
            <person name="Borriss R."/>
            <person name="Boursier L."/>
            <person name="Brans A."/>
            <person name="Braun M."/>
            <person name="Brignell S.C."/>
            <person name="Bron S."/>
            <person name="Brouillet S."/>
            <person name="Bruschi C.V."/>
            <person name="Caldwell B."/>
            <person name="Capuano V."/>
            <person name="Carter N.M."/>
            <person name="Choi S.-K."/>
            <person name="Codani J.-J."/>
            <person name="Connerton I.F."/>
            <person name="Cummings N.J."/>
            <person name="Daniel R.A."/>
            <person name="Denizot F."/>
            <person name="Devine K.M."/>
            <person name="Duesterhoeft A."/>
            <person name="Ehrlich S.D."/>
            <person name="Emmerson P.T."/>
            <person name="Entian K.-D."/>
            <person name="Errington J."/>
            <person name="Fabret C."/>
            <person name="Ferrari E."/>
            <person name="Foulger D."/>
            <person name="Fritz C."/>
            <person name="Fujita M."/>
            <person name="Fujita Y."/>
            <person name="Fuma S."/>
            <person name="Galizzi A."/>
            <person name="Galleron N."/>
            <person name="Ghim S.-Y."/>
            <person name="Glaser P."/>
            <person name="Goffeau A."/>
            <person name="Golightly E.J."/>
            <person name="Grandi G."/>
            <person name="Guiseppi G."/>
            <person name="Guy B.J."/>
            <person name="Haga K."/>
            <person name="Haiech J."/>
            <person name="Harwood C.R."/>
            <person name="Henaut A."/>
            <person name="Hilbert H."/>
            <person name="Holsappel S."/>
            <person name="Hosono S."/>
            <person name="Hullo M.-F."/>
            <person name="Itaya M."/>
            <person name="Jones L.-M."/>
            <person name="Joris B."/>
            <person name="Karamata D."/>
            <person name="Kasahara Y."/>
            <person name="Klaerr-Blanchard M."/>
            <person name="Klein C."/>
            <person name="Kobayashi Y."/>
            <person name="Koetter P."/>
            <person name="Koningstein G."/>
            <person name="Krogh S."/>
            <person name="Kumano M."/>
            <person name="Kurita K."/>
            <person name="Lapidus A."/>
            <person name="Lardinois S."/>
            <person name="Lauber J."/>
            <person name="Lazarevic V."/>
            <person name="Lee S.-M."/>
            <person name="Levine A."/>
            <person name="Liu H."/>
            <person name="Masuda S."/>
            <person name="Mauel C."/>
            <person name="Medigue C."/>
            <person name="Medina N."/>
            <person name="Mellado R.P."/>
            <person name="Mizuno M."/>
            <person name="Moestl D."/>
            <person name="Nakai S."/>
            <person name="Noback M."/>
            <person name="Noone D."/>
            <person name="O'Reilly M."/>
            <person name="Ogawa K."/>
            <person name="Ogiwara A."/>
            <person name="Oudega B."/>
            <person name="Park S.-H."/>
            <person name="Parro V."/>
            <person name="Pohl T.M."/>
            <person name="Portetelle D."/>
            <person name="Porwollik S."/>
            <person name="Prescott A.M."/>
            <person name="Presecan E."/>
            <person name="Pujic P."/>
            <person name="Purnelle B."/>
            <person name="Rapoport G."/>
            <person name="Rey M."/>
            <person name="Reynolds S."/>
            <person name="Rieger M."/>
            <person name="Rivolta C."/>
            <person name="Rocha E."/>
            <person name="Roche B."/>
            <person name="Rose M."/>
            <person name="Sadaie Y."/>
            <person name="Sato T."/>
            <person name="Scanlan E."/>
            <person name="Schleich S."/>
            <person name="Schroeter R."/>
            <person name="Scoffone F."/>
            <person name="Sekiguchi J."/>
            <person name="Sekowska A."/>
            <person name="Seror S.J."/>
            <person name="Serror P."/>
            <person name="Shin B.-S."/>
            <person name="Soldo B."/>
            <person name="Sorokin A."/>
            <person name="Tacconi E."/>
            <person name="Takagi T."/>
            <person name="Takahashi H."/>
            <person name="Takemaru K."/>
            <person name="Takeuchi M."/>
            <person name="Tamakoshi A."/>
            <person name="Tanaka T."/>
            <person name="Terpstra P."/>
            <person name="Tognoni A."/>
            <person name="Tosato V."/>
            <person name="Uchiyama S."/>
            <person name="Vandenbol M."/>
            <person name="Vannier F."/>
            <person name="Vassarotti A."/>
            <person name="Viari A."/>
            <person name="Wambutt R."/>
            <person name="Wedler E."/>
            <person name="Wedler H."/>
            <person name="Weitzenegger T."/>
            <person name="Winters P."/>
            <person name="Wipat A."/>
            <person name="Yamamoto H."/>
            <person name="Yamane K."/>
            <person name="Yasumoto K."/>
            <person name="Yata K."/>
            <person name="Yoshida K."/>
            <person name="Yoshikawa H.-F."/>
            <person name="Zumstein E."/>
            <person name="Yoshikawa H."/>
            <person name="Danchin A."/>
        </authorList>
    </citation>
    <scope>NUCLEOTIDE SEQUENCE [LARGE SCALE GENOMIC DNA]</scope>
    <source>
        <strain>168</strain>
    </source>
</reference>
<keyword id="KW-0378">Hydrolase</keyword>
<keyword id="KW-1185">Reference proteome</keyword>
<sequence>MLRLGIDIDGTITAQDTFVPYLNRSFNLSISLNDMTDYDLTKLLNITQEEFWDWMNQNEAIIYKEALLAQHAKQSLDLLKEEHKLIYITARRTHLTDITYEWFDRQNIHYDHIELVGGHHKVEAVKNHNIDLFFEDHHGNAMMIAKEAGIPVILFNSPYNQLPIDSNIIRVNNWLEAVQWMNNNKHHLIRVNN</sequence>